<reference key="1">
    <citation type="journal article" date="2006" name="J. Bacteriol.">
        <title>Genome sequence of Aeromonas hydrophila ATCC 7966T: jack of all trades.</title>
        <authorList>
            <person name="Seshadri R."/>
            <person name="Joseph S.W."/>
            <person name="Chopra A.K."/>
            <person name="Sha J."/>
            <person name="Shaw J."/>
            <person name="Graf J."/>
            <person name="Haft D.H."/>
            <person name="Wu M."/>
            <person name="Ren Q."/>
            <person name="Rosovitz M.J."/>
            <person name="Madupu R."/>
            <person name="Tallon L."/>
            <person name="Kim M."/>
            <person name="Jin S."/>
            <person name="Vuong H."/>
            <person name="Stine O.C."/>
            <person name="Ali A."/>
            <person name="Horneman A.J."/>
            <person name="Heidelberg J.F."/>
        </authorList>
    </citation>
    <scope>NUCLEOTIDE SEQUENCE [LARGE SCALE GENOMIC DNA]</scope>
    <source>
        <strain>ATCC 7966 / DSM 30187 / BCRC 13018 / CCUG 14551 / JCM 1027 / KCTC 2358 / NCIMB 9240 / NCTC 8049</strain>
    </source>
</reference>
<feature type="chain" id="PRO_1000013633" description="Ion-translocating oxidoreductase complex subunit B">
    <location>
        <begin position="1"/>
        <end position="187"/>
    </location>
</feature>
<feature type="domain" description="4Fe-4S" evidence="1">
    <location>
        <begin position="32"/>
        <end position="90"/>
    </location>
</feature>
<feature type="domain" description="4Fe-4S ferredoxin-type 1" evidence="1">
    <location>
        <begin position="106"/>
        <end position="135"/>
    </location>
</feature>
<feature type="domain" description="4Fe-4S ferredoxin-type 2" evidence="1">
    <location>
        <begin position="136"/>
        <end position="165"/>
    </location>
</feature>
<feature type="region of interest" description="Hydrophobic" evidence="1">
    <location>
        <begin position="1"/>
        <end position="26"/>
    </location>
</feature>
<feature type="binding site" evidence="1">
    <location>
        <position position="49"/>
    </location>
    <ligand>
        <name>[4Fe-4S] cluster</name>
        <dbReference type="ChEBI" id="CHEBI:49883"/>
        <label>1</label>
    </ligand>
</feature>
<feature type="binding site" evidence="1">
    <location>
        <position position="52"/>
    </location>
    <ligand>
        <name>[4Fe-4S] cluster</name>
        <dbReference type="ChEBI" id="CHEBI:49883"/>
        <label>1</label>
    </ligand>
</feature>
<feature type="binding site" evidence="1">
    <location>
        <position position="57"/>
    </location>
    <ligand>
        <name>[4Fe-4S] cluster</name>
        <dbReference type="ChEBI" id="CHEBI:49883"/>
        <label>1</label>
    </ligand>
</feature>
<feature type="binding site" evidence="1">
    <location>
        <position position="73"/>
    </location>
    <ligand>
        <name>[4Fe-4S] cluster</name>
        <dbReference type="ChEBI" id="CHEBI:49883"/>
        <label>1</label>
    </ligand>
</feature>
<feature type="binding site" evidence="1">
    <location>
        <position position="115"/>
    </location>
    <ligand>
        <name>[4Fe-4S] cluster</name>
        <dbReference type="ChEBI" id="CHEBI:49883"/>
        <label>2</label>
    </ligand>
</feature>
<feature type="binding site" evidence="1">
    <location>
        <position position="118"/>
    </location>
    <ligand>
        <name>[4Fe-4S] cluster</name>
        <dbReference type="ChEBI" id="CHEBI:49883"/>
        <label>2</label>
    </ligand>
</feature>
<feature type="binding site" evidence="1">
    <location>
        <position position="121"/>
    </location>
    <ligand>
        <name>[4Fe-4S] cluster</name>
        <dbReference type="ChEBI" id="CHEBI:49883"/>
        <label>2</label>
    </ligand>
</feature>
<feature type="binding site" evidence="1">
    <location>
        <position position="125"/>
    </location>
    <ligand>
        <name>[4Fe-4S] cluster</name>
        <dbReference type="ChEBI" id="CHEBI:49883"/>
        <label>3</label>
    </ligand>
</feature>
<feature type="binding site" evidence="1">
    <location>
        <position position="145"/>
    </location>
    <ligand>
        <name>[4Fe-4S] cluster</name>
        <dbReference type="ChEBI" id="CHEBI:49883"/>
        <label>3</label>
    </ligand>
</feature>
<feature type="binding site" evidence="1">
    <location>
        <position position="148"/>
    </location>
    <ligand>
        <name>[4Fe-4S] cluster</name>
        <dbReference type="ChEBI" id="CHEBI:49883"/>
        <label>3</label>
    </ligand>
</feature>
<feature type="binding site" evidence="1">
    <location>
        <position position="151"/>
    </location>
    <ligand>
        <name>[4Fe-4S] cluster</name>
        <dbReference type="ChEBI" id="CHEBI:49883"/>
        <label>3</label>
    </ligand>
</feature>
<feature type="binding site" evidence="1">
    <location>
        <position position="155"/>
    </location>
    <ligand>
        <name>[4Fe-4S] cluster</name>
        <dbReference type="ChEBI" id="CHEBI:49883"/>
        <label>2</label>
    </ligand>
</feature>
<dbReference type="EC" id="7.-.-.-" evidence="1"/>
<dbReference type="EMBL" id="CP000462">
    <property type="protein sequence ID" value="ABK35815.1"/>
    <property type="molecule type" value="Genomic_DNA"/>
</dbReference>
<dbReference type="RefSeq" id="YP_857144.1">
    <property type="nucleotide sequence ID" value="NC_008570.1"/>
</dbReference>
<dbReference type="STRING" id="380703.AHA_2635"/>
<dbReference type="EnsemblBacteria" id="ABK35815">
    <property type="protein sequence ID" value="ABK35815"/>
    <property type="gene ID" value="AHA_2635"/>
</dbReference>
<dbReference type="GeneID" id="4490093"/>
<dbReference type="KEGG" id="aha:AHA_2635"/>
<dbReference type="PATRIC" id="fig|380703.7.peg.2638"/>
<dbReference type="eggNOG" id="COG2878">
    <property type="taxonomic scope" value="Bacteria"/>
</dbReference>
<dbReference type="HOGENOM" id="CLU_063448_2_0_6"/>
<dbReference type="OrthoDB" id="9789936at2"/>
<dbReference type="Proteomes" id="UP000000756">
    <property type="component" value="Chromosome"/>
</dbReference>
<dbReference type="GO" id="GO:0005886">
    <property type="term" value="C:plasma membrane"/>
    <property type="evidence" value="ECO:0007669"/>
    <property type="project" value="UniProtKB-SubCell"/>
</dbReference>
<dbReference type="GO" id="GO:0051539">
    <property type="term" value="F:4 iron, 4 sulfur cluster binding"/>
    <property type="evidence" value="ECO:0007669"/>
    <property type="project" value="UniProtKB-UniRule"/>
</dbReference>
<dbReference type="GO" id="GO:0009055">
    <property type="term" value="F:electron transfer activity"/>
    <property type="evidence" value="ECO:0007669"/>
    <property type="project" value="InterPro"/>
</dbReference>
<dbReference type="GO" id="GO:0046872">
    <property type="term" value="F:metal ion binding"/>
    <property type="evidence" value="ECO:0007669"/>
    <property type="project" value="UniProtKB-KW"/>
</dbReference>
<dbReference type="GO" id="GO:0022900">
    <property type="term" value="P:electron transport chain"/>
    <property type="evidence" value="ECO:0007669"/>
    <property type="project" value="UniProtKB-UniRule"/>
</dbReference>
<dbReference type="FunFam" id="1.10.15.40:FF:000001">
    <property type="entry name" value="Ion-translocating oxidoreductase complex subunit B"/>
    <property type="match status" value="1"/>
</dbReference>
<dbReference type="Gene3D" id="3.30.70.20">
    <property type="match status" value="1"/>
</dbReference>
<dbReference type="Gene3D" id="1.10.15.40">
    <property type="entry name" value="Electron transport complex subunit B, putative Fe-S cluster"/>
    <property type="match status" value="1"/>
</dbReference>
<dbReference type="HAMAP" id="MF_00463">
    <property type="entry name" value="RsxB_RnfB"/>
    <property type="match status" value="1"/>
</dbReference>
<dbReference type="InterPro" id="IPR007202">
    <property type="entry name" value="4Fe-4S_dom"/>
</dbReference>
<dbReference type="InterPro" id="IPR017896">
    <property type="entry name" value="4Fe4S_Fe-S-bd"/>
</dbReference>
<dbReference type="InterPro" id="IPR017900">
    <property type="entry name" value="4Fe4S_Fe_S_CS"/>
</dbReference>
<dbReference type="InterPro" id="IPR010207">
    <property type="entry name" value="Elect_transpt_cplx_RnfB/RsxB"/>
</dbReference>
<dbReference type="InterPro" id="IPR016463">
    <property type="entry name" value="RnfB/RsxB_Proteobac"/>
</dbReference>
<dbReference type="InterPro" id="IPR050294">
    <property type="entry name" value="RnfB_subfamily"/>
</dbReference>
<dbReference type="NCBIfam" id="NF003475">
    <property type="entry name" value="PRK05113.1"/>
    <property type="match status" value="1"/>
</dbReference>
<dbReference type="NCBIfam" id="TIGR01944">
    <property type="entry name" value="rnfB"/>
    <property type="match status" value="1"/>
</dbReference>
<dbReference type="PANTHER" id="PTHR42859:SF3">
    <property type="entry name" value="ION-TRANSLOCATING OXIDOREDUCTASE COMPLEX SUBUNIT B"/>
    <property type="match status" value="1"/>
</dbReference>
<dbReference type="PANTHER" id="PTHR42859">
    <property type="entry name" value="OXIDOREDUCTASE"/>
    <property type="match status" value="1"/>
</dbReference>
<dbReference type="Pfam" id="PF14697">
    <property type="entry name" value="Fer4_21"/>
    <property type="match status" value="1"/>
</dbReference>
<dbReference type="Pfam" id="PF04060">
    <property type="entry name" value="FeS"/>
    <property type="match status" value="1"/>
</dbReference>
<dbReference type="PIRSF" id="PIRSF005784">
    <property type="entry name" value="Elect_transpt_RnfB"/>
    <property type="match status" value="1"/>
</dbReference>
<dbReference type="SUPFAM" id="SSF54862">
    <property type="entry name" value="4Fe-4S ferredoxins"/>
    <property type="match status" value="1"/>
</dbReference>
<dbReference type="PROSITE" id="PS51656">
    <property type="entry name" value="4FE4S"/>
    <property type="match status" value="1"/>
</dbReference>
<dbReference type="PROSITE" id="PS00198">
    <property type="entry name" value="4FE4S_FER_1"/>
    <property type="match status" value="2"/>
</dbReference>
<dbReference type="PROSITE" id="PS51379">
    <property type="entry name" value="4FE4S_FER_2"/>
    <property type="match status" value="2"/>
</dbReference>
<accession>A0KLJ3</accession>
<comment type="function">
    <text evidence="1">Part of a membrane-bound complex that couples electron transfer with translocation of ions across the membrane.</text>
</comment>
<comment type="cofactor">
    <cofactor evidence="1">
        <name>[4Fe-4S] cluster</name>
        <dbReference type="ChEBI" id="CHEBI:49883"/>
    </cofactor>
    <text evidence="1">Binds 3 [4Fe-4S] clusters.</text>
</comment>
<comment type="subunit">
    <text evidence="1">The complex is composed of six subunits: RnfA, RnfB, RnfC, RnfD, RnfE and RnfG.</text>
</comment>
<comment type="subcellular location">
    <subcellularLocation>
        <location evidence="1">Cell inner membrane</location>
    </subcellularLocation>
</comment>
<comment type="similarity">
    <text evidence="1">Belongs to the 4Fe4S bacterial-type ferredoxin family. RnfB subfamily.</text>
</comment>
<keyword id="KW-0004">4Fe-4S</keyword>
<keyword id="KW-0997">Cell inner membrane</keyword>
<keyword id="KW-1003">Cell membrane</keyword>
<keyword id="KW-0249">Electron transport</keyword>
<keyword id="KW-0408">Iron</keyword>
<keyword id="KW-0411">Iron-sulfur</keyword>
<keyword id="KW-0472">Membrane</keyword>
<keyword id="KW-0479">Metal-binding</keyword>
<keyword id="KW-1185">Reference proteome</keyword>
<keyword id="KW-0677">Repeat</keyword>
<keyword id="KW-1278">Translocase</keyword>
<keyword id="KW-0813">Transport</keyword>
<protein>
    <recommendedName>
        <fullName evidence="1">Ion-translocating oxidoreductase complex subunit B</fullName>
        <ecNumber evidence="1">7.-.-.-</ecNumber>
    </recommendedName>
    <alternativeName>
        <fullName evidence="1">Rnf electron transport complex subunit B</fullName>
    </alternativeName>
</protein>
<evidence type="ECO:0000255" key="1">
    <source>
        <dbReference type="HAMAP-Rule" id="MF_00463"/>
    </source>
</evidence>
<proteinExistence type="inferred from homology"/>
<sequence>MTHILFAVLVLALLALAFGIILGFAAVKFHVEADPIVDQLDALLPQTQCGQCGYPGCKPYAEALANGDQINKCVPGGDATMRKIADLMGVEPQPLGGAEAAAPIKKVAFIHEDQCIGCTKCIQACPVDAIVGATKAMHTVIADECTGCDLCVDPCPTDCIEMIPVPTTVDNWKWDLANVAIPVKIVE</sequence>
<gene>
    <name evidence="1" type="primary">rnfB</name>
    <name type="ordered locus">AHA_2635</name>
</gene>
<organism>
    <name type="scientific">Aeromonas hydrophila subsp. hydrophila (strain ATCC 7966 / DSM 30187 / BCRC 13018 / CCUG 14551 / JCM 1027 / KCTC 2358 / NCIMB 9240 / NCTC 8049)</name>
    <dbReference type="NCBI Taxonomy" id="380703"/>
    <lineage>
        <taxon>Bacteria</taxon>
        <taxon>Pseudomonadati</taxon>
        <taxon>Pseudomonadota</taxon>
        <taxon>Gammaproteobacteria</taxon>
        <taxon>Aeromonadales</taxon>
        <taxon>Aeromonadaceae</taxon>
        <taxon>Aeromonas</taxon>
    </lineage>
</organism>
<name>RNFB_AERHH</name>